<reference key="1">
    <citation type="journal article" date="1987" name="Zool. Sci.">
        <title>Purification and structure of mosact and its derivatives from the egg jelly of the sea urchin Clypeaster japonicus.</title>
        <authorList>
            <person name="Suzuki N."/>
            <person name="Kurita M."/>
            <person name="Yoshino K."/>
            <person name="Kajiura H."/>
            <person name="Nomura K."/>
            <person name="Yamaguchi M."/>
        </authorList>
    </citation>
    <scope>PROTEIN SEQUENCE</scope>
    <source>
        <tissue>Egg jelly</tissue>
    </source>
</reference>
<protein>
    <recommendedName>
        <fullName>[Gln6]-mosact</fullName>
    </recommendedName>
</protein>
<comment type="function">
    <text>Stimulates sperm respiration and motility.</text>
</comment>
<accession>P19962</accession>
<feature type="peptide" id="PRO_0000044172" description="[Gln6]-mosact">
    <location>
        <begin position="1"/>
        <end position="10"/>
    </location>
</feature>
<name>MOSQ_CLYJA</name>
<proteinExistence type="evidence at protein level"/>
<keyword id="KW-0903">Direct protein sequencing</keyword>
<sequence>DSDSAQNLIG</sequence>
<organism>
    <name type="scientific">Clypeaster japonicus</name>
    <name type="common">Sand dollar</name>
    <dbReference type="NCBI Taxonomy" id="7644"/>
    <lineage>
        <taxon>Eukaryota</taxon>
        <taxon>Metazoa</taxon>
        <taxon>Echinodermata</taxon>
        <taxon>Eleutherozoa</taxon>
        <taxon>Echinozoa</taxon>
        <taxon>Echinoidea</taxon>
        <taxon>Euechinoidea</taxon>
        <taxon>Gnathostomata</taxon>
        <taxon>Clypeasteroida</taxon>
        <taxon>Clypeasteridae</taxon>
        <taxon>Clypeaster</taxon>
    </lineage>
</organism>
<dbReference type="PIR" id="JN0025">
    <property type="entry name" value="JN0025"/>
</dbReference>